<reference key="1">
    <citation type="journal article" date="2002" name="J. Immunol.">
        <title>FDC-SP, a novel secreted protein expressed by follicular dendritic cells.</title>
        <authorList>
            <person name="Marshall A.J."/>
            <person name="Du Q."/>
            <person name="Draves K.E."/>
            <person name="Shikishima Y."/>
            <person name="Hayglass K.T."/>
            <person name="Clark E.A."/>
        </authorList>
    </citation>
    <scope>NUCLEOTIDE SEQUENCE [MRNA]</scope>
    <scope>TISSUE SPECIFICITY</scope>
    <source>
        <tissue>Tonsil</tissue>
    </source>
</reference>
<reference key="2">
    <citation type="journal article" date="2003" name="Genome Res.">
        <title>The secreted protein discovery initiative (SPDI), a large-scale effort to identify novel human secreted and transmembrane proteins: a bioinformatics assessment.</title>
        <authorList>
            <person name="Clark H.F."/>
            <person name="Gurney A.L."/>
            <person name="Abaya E."/>
            <person name="Baker K."/>
            <person name="Baldwin D.T."/>
            <person name="Brush J."/>
            <person name="Chen J."/>
            <person name="Chow B."/>
            <person name="Chui C."/>
            <person name="Crowley C."/>
            <person name="Currell B."/>
            <person name="Deuel B."/>
            <person name="Dowd P."/>
            <person name="Eaton D."/>
            <person name="Foster J.S."/>
            <person name="Grimaldi C."/>
            <person name="Gu Q."/>
            <person name="Hass P.E."/>
            <person name="Heldens S."/>
            <person name="Huang A."/>
            <person name="Kim H.S."/>
            <person name="Klimowski L."/>
            <person name="Jin Y."/>
            <person name="Johnson S."/>
            <person name="Lee J."/>
            <person name="Lewis L."/>
            <person name="Liao D."/>
            <person name="Mark M.R."/>
            <person name="Robbie E."/>
            <person name="Sanchez C."/>
            <person name="Schoenfeld J."/>
            <person name="Seshagiri S."/>
            <person name="Simmons L."/>
            <person name="Singh J."/>
            <person name="Smith V."/>
            <person name="Stinson J."/>
            <person name="Vagts A."/>
            <person name="Vandlen R.L."/>
            <person name="Watanabe C."/>
            <person name="Wieand D."/>
            <person name="Woods K."/>
            <person name="Xie M.-H."/>
            <person name="Yansura D.G."/>
            <person name="Yi S."/>
            <person name="Yu G."/>
            <person name="Yuan J."/>
            <person name="Zhang M."/>
            <person name="Zhang Z."/>
            <person name="Goddard A.D."/>
            <person name="Wood W.I."/>
            <person name="Godowski P.J."/>
            <person name="Gray A.M."/>
        </authorList>
    </citation>
    <scope>NUCLEOTIDE SEQUENCE [LARGE SCALE MRNA]</scope>
</reference>
<reference key="3">
    <citation type="journal article" date="2004" name="Genome Res.">
        <title>The status, quality, and expansion of the NIH full-length cDNA project: the Mammalian Gene Collection (MGC).</title>
        <authorList>
            <consortium name="The MGC Project Team"/>
        </authorList>
    </citation>
    <scope>NUCLEOTIDE SEQUENCE [LARGE SCALE MRNA]</scope>
    <source>
        <tissue>Thyroid</tissue>
    </source>
</reference>
<reference key="4">
    <citation type="journal article" date="2012" name="Mol. Cell. Proteomics">
        <title>Human urinary glycoproteomics; attachment site specific analysis of N- and O-linked glycosylations by CID and ECD.</title>
        <authorList>
            <person name="Halim A."/>
            <person name="Nilsson J."/>
            <person name="Ruetschi U."/>
            <person name="Hesse C."/>
            <person name="Larson G."/>
        </authorList>
    </citation>
    <scope>GLYCOSYLATION</scope>
    <scope>STRUCTURE OF CARBOHYDRATES</scope>
    <scope>IDENTIFICATION BY MASS SPECTROMETRY</scope>
</reference>
<proteinExistence type="evidence at protein level"/>
<organism>
    <name type="scientific">Homo sapiens</name>
    <name type="common">Human</name>
    <dbReference type="NCBI Taxonomy" id="9606"/>
    <lineage>
        <taxon>Eukaryota</taxon>
        <taxon>Metazoa</taxon>
        <taxon>Chordata</taxon>
        <taxon>Craniata</taxon>
        <taxon>Vertebrata</taxon>
        <taxon>Euteleostomi</taxon>
        <taxon>Mammalia</taxon>
        <taxon>Eutheria</taxon>
        <taxon>Euarchontoglires</taxon>
        <taxon>Primates</taxon>
        <taxon>Haplorrhini</taxon>
        <taxon>Catarrhini</taxon>
        <taxon>Hominidae</taxon>
        <taxon>Homo</taxon>
    </lineage>
</organism>
<name>FDSCP_HUMAN</name>
<comment type="function">
    <text>Can bind to the surface of B-lymphoma cells, but not T-lymphoma cells, consistent with a function as a secreted mediator acting upon B-cells.</text>
</comment>
<comment type="interaction">
    <interactant intactId="EBI-12210457">
        <id>Q8NFU4</id>
    </interactant>
    <interactant intactId="EBI-12092171">
        <id>Q12797-6</id>
        <label>ASPH</label>
    </interactant>
    <organismsDiffer>false</organismsDiffer>
    <experiments>3</experiments>
</comment>
<comment type="interaction">
    <interactant intactId="EBI-12210457">
        <id>Q8NFU4</id>
    </interactant>
    <interactant intactId="EBI-11956541">
        <id>Q9GZY8-5</id>
        <label>MFF</label>
    </interactant>
    <organismsDiffer>false</organismsDiffer>
    <experiments>3</experiments>
</comment>
<comment type="interaction">
    <interactant intactId="EBI-12210457">
        <id>Q8NFU4</id>
    </interactant>
    <interactant intactId="EBI-947187">
        <id>Q9UHD9</id>
        <label>UBQLN2</label>
    </interactant>
    <organismsDiffer>false</organismsDiffer>
    <experiments>3</experiments>
</comment>
<comment type="subcellular location">
    <subcellularLocation>
        <location>Secreted</location>
    </subcellularLocation>
</comment>
<comment type="tissue specificity">
    <text evidence="2">Abundantly expressed in tonsil, lymph node, and trachea; strong expression in prostate; lower expression in thyroid, stomach, and colon.</text>
</comment>
<comment type="PTM">
    <text evidence="3">O-glycosylated with core 1 or possibly core 8 glycans.</text>
</comment>
<feature type="signal peptide" evidence="1">
    <location>
        <begin position="1"/>
        <end position="17"/>
    </location>
</feature>
<feature type="chain" id="PRO_0000021247" description="Follicular dendritic cell secreted peptide">
    <location>
        <begin position="18"/>
        <end position="85"/>
    </location>
</feature>
<feature type="region of interest" description="O-glycosylated at one site">
    <location>
        <begin position="75"/>
        <end position="83"/>
    </location>
</feature>
<keyword id="KW-0325">Glycoprotein</keyword>
<keyword id="KW-1267">Proteomics identification</keyword>
<keyword id="KW-1185">Reference proteome</keyword>
<keyword id="KW-0964">Secreted</keyword>
<keyword id="KW-0732">Signal</keyword>
<evidence type="ECO:0000255" key="1"/>
<evidence type="ECO:0000269" key="2">
    <source>
    </source>
</evidence>
<evidence type="ECO:0000269" key="3">
    <source>
    </source>
</evidence>
<dbReference type="EMBL" id="AF435080">
    <property type="protein sequence ID" value="AAN01116.1"/>
    <property type="molecule type" value="mRNA"/>
</dbReference>
<dbReference type="EMBL" id="AY358958">
    <property type="protein sequence ID" value="AAQ89317.1"/>
    <property type="molecule type" value="mRNA"/>
</dbReference>
<dbReference type="EMBL" id="BC062213">
    <property type="protein sequence ID" value="AAH62213.1"/>
    <property type="molecule type" value="mRNA"/>
</dbReference>
<dbReference type="CCDS" id="CCDS3537.1"/>
<dbReference type="RefSeq" id="NP_694542.1">
    <property type="nucleotide sequence ID" value="NM_152997.4"/>
</dbReference>
<dbReference type="BioGRID" id="129282">
    <property type="interactions" value="11"/>
</dbReference>
<dbReference type="IntAct" id="Q8NFU4">
    <property type="interactions" value="11"/>
</dbReference>
<dbReference type="STRING" id="9606.ENSP00000318437"/>
<dbReference type="GlyCosmos" id="Q8NFU4">
    <property type="glycosylation" value="4 sites, 1 glycan"/>
</dbReference>
<dbReference type="GlyGen" id="Q8NFU4">
    <property type="glycosylation" value="4 sites, 1 O-linked glycan (4 sites)"/>
</dbReference>
<dbReference type="iPTMnet" id="Q8NFU4"/>
<dbReference type="PhosphoSitePlus" id="Q8NFU4"/>
<dbReference type="BioMuta" id="FDCSP"/>
<dbReference type="jPOST" id="Q8NFU4"/>
<dbReference type="MassIVE" id="Q8NFU4"/>
<dbReference type="PaxDb" id="9606-ENSP00000318437"/>
<dbReference type="PeptideAtlas" id="Q8NFU4"/>
<dbReference type="ProteomicsDB" id="73361"/>
<dbReference type="Antibodypedia" id="2662">
    <property type="antibodies" value="77 antibodies from 24 providers"/>
</dbReference>
<dbReference type="DNASU" id="260436"/>
<dbReference type="Ensembl" id="ENST00000317987.6">
    <property type="protein sequence ID" value="ENSP00000318437.5"/>
    <property type="gene ID" value="ENSG00000181617.6"/>
</dbReference>
<dbReference type="GeneID" id="260436"/>
<dbReference type="KEGG" id="hsa:260436"/>
<dbReference type="MANE-Select" id="ENST00000317987.6">
    <property type="protein sequence ID" value="ENSP00000318437.5"/>
    <property type="RefSeq nucleotide sequence ID" value="NM_152997.4"/>
    <property type="RefSeq protein sequence ID" value="NP_694542.1"/>
</dbReference>
<dbReference type="UCSC" id="uc003hfd.4">
    <property type="organism name" value="human"/>
</dbReference>
<dbReference type="AGR" id="HGNC:19215"/>
<dbReference type="CTD" id="260436"/>
<dbReference type="DisGeNET" id="260436"/>
<dbReference type="GeneCards" id="FDCSP"/>
<dbReference type="HGNC" id="HGNC:19215">
    <property type="gene designation" value="FDCSP"/>
</dbReference>
<dbReference type="HPA" id="ENSG00000181617">
    <property type="expression patterns" value="Group enriched (lymphoid tissue, salivary gland)"/>
</dbReference>
<dbReference type="MIM" id="607241">
    <property type="type" value="gene"/>
</dbReference>
<dbReference type="neXtProt" id="NX_Q8NFU4"/>
<dbReference type="OpenTargets" id="ENSG00000181617"/>
<dbReference type="PharmGKB" id="PA134922601"/>
<dbReference type="VEuPathDB" id="HostDB:ENSG00000181617"/>
<dbReference type="eggNOG" id="ENOG502R1D0">
    <property type="taxonomic scope" value="Eukaryota"/>
</dbReference>
<dbReference type="GeneTree" id="ENSGT00390000015551"/>
<dbReference type="HOGENOM" id="CLU_196927_0_0_1"/>
<dbReference type="InParanoid" id="Q8NFU4"/>
<dbReference type="OMA" id="QRYPWFR"/>
<dbReference type="PAN-GO" id="Q8NFU4">
    <property type="GO annotations" value="0 GO annotations based on evolutionary models"/>
</dbReference>
<dbReference type="PhylomeDB" id="Q8NFU4"/>
<dbReference type="TreeFam" id="TF338548"/>
<dbReference type="PathwayCommons" id="Q8NFU4"/>
<dbReference type="SignaLink" id="Q8NFU4"/>
<dbReference type="BioGRID-ORCS" id="260436">
    <property type="hits" value="11 hits in 1139 CRISPR screens"/>
</dbReference>
<dbReference type="ChiTaRS" id="FDCSP">
    <property type="organism name" value="human"/>
</dbReference>
<dbReference type="GenomeRNAi" id="260436"/>
<dbReference type="Pharos" id="Q8NFU4">
    <property type="development level" value="Tbio"/>
</dbReference>
<dbReference type="PRO" id="PR:Q8NFU4"/>
<dbReference type="Proteomes" id="UP000005640">
    <property type="component" value="Chromosome 4"/>
</dbReference>
<dbReference type="RNAct" id="Q8NFU4">
    <property type="molecule type" value="protein"/>
</dbReference>
<dbReference type="Bgee" id="ENSG00000181617">
    <property type="expression patterns" value="Expressed in olfactory segment of nasal mucosa and 120 other cell types or tissues"/>
</dbReference>
<dbReference type="ExpressionAtlas" id="Q8NFU4">
    <property type="expression patterns" value="baseline and differential"/>
</dbReference>
<dbReference type="GO" id="GO:0005576">
    <property type="term" value="C:extracellular region"/>
    <property type="evidence" value="ECO:0007669"/>
    <property type="project" value="UniProtKB-SubCell"/>
</dbReference>
<dbReference type="InterPro" id="IPR029187">
    <property type="entry name" value="FDC-SP"/>
</dbReference>
<dbReference type="Pfam" id="PF15215">
    <property type="entry name" value="FDC-SP"/>
    <property type="match status" value="1"/>
</dbReference>
<sequence>MKKVLLLITAILAVAVGFPVSQDQEREKRSISDSDELASGFFVFPYPYPFRPLPPIPFPRFPWFRRNFPIPIPESAPTTPLPSEK</sequence>
<protein>
    <recommendedName>
        <fullName>Follicular dendritic cell secreted peptide</fullName>
        <shortName>FDC secreted protein</shortName>
        <shortName>FDC-SP</shortName>
    </recommendedName>
</protein>
<gene>
    <name type="primary">FDCSP</name>
    <name type="synonym">C4orf7</name>
    <name type="ORF">UNQ733/PRO1419</name>
</gene>
<accession>Q8NFU4</accession>